<organism>
    <name type="scientific">Rhodopseudomonas palustris (strain ATCC BAA-98 / CGA009)</name>
    <dbReference type="NCBI Taxonomy" id="258594"/>
    <lineage>
        <taxon>Bacteria</taxon>
        <taxon>Pseudomonadati</taxon>
        <taxon>Pseudomonadota</taxon>
        <taxon>Alphaproteobacteria</taxon>
        <taxon>Hyphomicrobiales</taxon>
        <taxon>Nitrobacteraceae</taxon>
        <taxon>Rhodopseudomonas</taxon>
    </lineage>
</organism>
<gene>
    <name evidence="1" type="primary">anmK</name>
    <name type="ordered locus">RPA2461</name>
</gene>
<proteinExistence type="inferred from homology"/>
<comment type="function">
    <text evidence="1">Catalyzes the specific phosphorylation of 1,6-anhydro-N-acetylmuramic acid (anhMurNAc) with the simultaneous cleavage of the 1,6-anhydro ring, generating MurNAc-6-P. Is required for the utilization of anhMurNAc either imported from the medium or derived from its own cell wall murein, and thus plays a role in cell wall recycling.</text>
</comment>
<comment type="catalytic activity">
    <reaction evidence="1">
        <text>1,6-anhydro-N-acetyl-beta-muramate + ATP + H2O = N-acetyl-D-muramate 6-phosphate + ADP + H(+)</text>
        <dbReference type="Rhea" id="RHEA:24952"/>
        <dbReference type="ChEBI" id="CHEBI:15377"/>
        <dbReference type="ChEBI" id="CHEBI:15378"/>
        <dbReference type="ChEBI" id="CHEBI:30616"/>
        <dbReference type="ChEBI" id="CHEBI:58690"/>
        <dbReference type="ChEBI" id="CHEBI:58722"/>
        <dbReference type="ChEBI" id="CHEBI:456216"/>
        <dbReference type="EC" id="2.7.1.170"/>
    </reaction>
</comment>
<comment type="pathway">
    <text evidence="1">Amino-sugar metabolism; 1,6-anhydro-N-acetylmuramate degradation.</text>
</comment>
<comment type="pathway">
    <text evidence="1">Cell wall biogenesis; peptidoglycan recycling.</text>
</comment>
<comment type="similarity">
    <text evidence="1">Belongs to the anhydro-N-acetylmuramic acid kinase family.</text>
</comment>
<feature type="chain" id="PRO_0000250046" description="Anhydro-N-acetylmuramic acid kinase">
    <location>
        <begin position="1"/>
        <end position="367"/>
    </location>
</feature>
<feature type="binding site" evidence="1">
    <location>
        <begin position="11"/>
        <end position="18"/>
    </location>
    <ligand>
        <name>ATP</name>
        <dbReference type="ChEBI" id="CHEBI:30616"/>
    </ligand>
</feature>
<accession>Q6N702</accession>
<keyword id="KW-0067">ATP-binding</keyword>
<keyword id="KW-0119">Carbohydrate metabolism</keyword>
<keyword id="KW-0418">Kinase</keyword>
<keyword id="KW-0547">Nucleotide-binding</keyword>
<keyword id="KW-0808">Transferase</keyword>
<protein>
    <recommendedName>
        <fullName evidence="1">Anhydro-N-acetylmuramic acid kinase</fullName>
        <ecNumber evidence="1">2.7.1.170</ecNumber>
    </recommendedName>
    <alternativeName>
        <fullName evidence="1">AnhMurNAc kinase</fullName>
    </alternativeName>
</protein>
<evidence type="ECO:0000255" key="1">
    <source>
        <dbReference type="HAMAP-Rule" id="MF_01270"/>
    </source>
</evidence>
<dbReference type="EC" id="2.7.1.170" evidence="1"/>
<dbReference type="EMBL" id="BX572601">
    <property type="protein sequence ID" value="CAE27902.1"/>
    <property type="molecule type" value="Genomic_DNA"/>
</dbReference>
<dbReference type="RefSeq" id="WP_011158011.1">
    <property type="nucleotide sequence ID" value="NZ_CP116810.1"/>
</dbReference>
<dbReference type="SMR" id="Q6N702"/>
<dbReference type="STRING" id="258594.RPA2461"/>
<dbReference type="GeneID" id="66893524"/>
<dbReference type="eggNOG" id="COG2377">
    <property type="taxonomic scope" value="Bacteria"/>
</dbReference>
<dbReference type="HOGENOM" id="CLU_038782_3_0_5"/>
<dbReference type="PhylomeDB" id="Q6N702"/>
<dbReference type="UniPathway" id="UPA00343"/>
<dbReference type="UniPathway" id="UPA00544"/>
<dbReference type="GO" id="GO:0005524">
    <property type="term" value="F:ATP binding"/>
    <property type="evidence" value="ECO:0007669"/>
    <property type="project" value="UniProtKB-UniRule"/>
</dbReference>
<dbReference type="GO" id="GO:0016301">
    <property type="term" value="F:kinase activity"/>
    <property type="evidence" value="ECO:0007669"/>
    <property type="project" value="UniProtKB-KW"/>
</dbReference>
<dbReference type="GO" id="GO:0016773">
    <property type="term" value="F:phosphotransferase activity, alcohol group as acceptor"/>
    <property type="evidence" value="ECO:0007669"/>
    <property type="project" value="UniProtKB-UniRule"/>
</dbReference>
<dbReference type="GO" id="GO:0097175">
    <property type="term" value="P:1,6-anhydro-N-acetyl-beta-muramic acid catabolic process"/>
    <property type="evidence" value="ECO:0007669"/>
    <property type="project" value="UniProtKB-UniRule"/>
</dbReference>
<dbReference type="GO" id="GO:0006040">
    <property type="term" value="P:amino sugar metabolic process"/>
    <property type="evidence" value="ECO:0007669"/>
    <property type="project" value="InterPro"/>
</dbReference>
<dbReference type="GO" id="GO:0009254">
    <property type="term" value="P:peptidoglycan turnover"/>
    <property type="evidence" value="ECO:0007669"/>
    <property type="project" value="UniProtKB-UniRule"/>
</dbReference>
<dbReference type="Gene3D" id="3.30.420.40">
    <property type="match status" value="2"/>
</dbReference>
<dbReference type="HAMAP" id="MF_01270">
    <property type="entry name" value="AnhMurNAc_kinase"/>
    <property type="match status" value="1"/>
</dbReference>
<dbReference type="InterPro" id="IPR005338">
    <property type="entry name" value="Anhydro_N_Ac-Mur_kinase"/>
</dbReference>
<dbReference type="InterPro" id="IPR043129">
    <property type="entry name" value="ATPase_NBD"/>
</dbReference>
<dbReference type="NCBIfam" id="NF007141">
    <property type="entry name" value="PRK09585.1-5"/>
    <property type="match status" value="1"/>
</dbReference>
<dbReference type="PANTHER" id="PTHR30605">
    <property type="entry name" value="ANHYDRO-N-ACETYLMURAMIC ACID KINASE"/>
    <property type="match status" value="1"/>
</dbReference>
<dbReference type="PANTHER" id="PTHR30605:SF0">
    <property type="entry name" value="ANHYDRO-N-ACETYLMURAMIC ACID KINASE"/>
    <property type="match status" value="1"/>
</dbReference>
<dbReference type="Pfam" id="PF03702">
    <property type="entry name" value="AnmK"/>
    <property type="match status" value="1"/>
</dbReference>
<dbReference type="SUPFAM" id="SSF53067">
    <property type="entry name" value="Actin-like ATPase domain"/>
    <property type="match status" value="1"/>
</dbReference>
<name>ANMK_RHOPA</name>
<sequence length="367" mass="38390">MMMTAIGLMSGTSLDGVDVALIKTDGRRVGALGPSGYRPYTETERSLLRQALAEAVQLTARDARPGVLAEAERAVTIAHAEAVAAFVAQNRLSPGSVDIVGFHGQTVLHRPAEKLTVQIGDAKALAKAIRIPVVCDFRAADVAAGGQGAPLVPVYHRALAQSLGRDGPIGVINVGGVSNVTYIDGTDTLIACDTGPGNALLDDFMFRTLGKPFDCEGRLASQGVIDQAWLTEALQHPFFAKPTPKSLDRNDFANLTLRDWSPADGAATLTAFTARAIAAVQPLLPKPPQSWIVTGGGARNLTLMRMLREALAPASVESADALGWSADAMEAQAFGFLATRGLKGLPLSYPATTGVAFPMTGGLLARP</sequence>
<reference key="1">
    <citation type="journal article" date="2004" name="Nat. Biotechnol.">
        <title>Complete genome sequence of the metabolically versatile photosynthetic bacterium Rhodopseudomonas palustris.</title>
        <authorList>
            <person name="Larimer F.W."/>
            <person name="Chain P."/>
            <person name="Hauser L."/>
            <person name="Lamerdin J.E."/>
            <person name="Malfatti S."/>
            <person name="Do L."/>
            <person name="Land M.L."/>
            <person name="Pelletier D.A."/>
            <person name="Beatty J.T."/>
            <person name="Lang A.S."/>
            <person name="Tabita F.R."/>
            <person name="Gibson J.L."/>
            <person name="Hanson T.E."/>
            <person name="Bobst C."/>
            <person name="Torres y Torres J.L."/>
            <person name="Peres C."/>
            <person name="Harrison F.H."/>
            <person name="Gibson J."/>
            <person name="Harwood C.S."/>
        </authorList>
    </citation>
    <scope>NUCLEOTIDE SEQUENCE [LARGE SCALE GENOMIC DNA]</scope>
    <source>
        <strain>ATCC BAA-98 / CGA009</strain>
    </source>
</reference>